<protein>
    <recommendedName>
        <fullName evidence="1">Enoyl-[acyl-carrier-protein] reductase [NADH]</fullName>
        <shortName evidence="1">ENR</shortName>
        <ecNumber evidence="1">1.3.1.9</ecNumber>
    </recommendedName>
</protein>
<organism>
    <name type="scientific">Teredinibacter turnerae (strain ATCC 39867 / T7901)</name>
    <dbReference type="NCBI Taxonomy" id="377629"/>
    <lineage>
        <taxon>Bacteria</taxon>
        <taxon>Pseudomonadati</taxon>
        <taxon>Pseudomonadota</taxon>
        <taxon>Gammaproteobacteria</taxon>
        <taxon>Cellvibrionales</taxon>
        <taxon>Cellvibrionaceae</taxon>
        <taxon>Teredinibacter</taxon>
    </lineage>
</organism>
<name>FABV_TERTT</name>
<comment type="function">
    <text evidence="1">Involved in the final reduction of the elongation cycle of fatty acid synthesis (FAS II). Catalyzes the reduction of a carbon-carbon double bond in an enoyl moiety that is covalently linked to an acyl carrier protein (ACP).</text>
</comment>
<comment type="catalytic activity">
    <reaction evidence="1">
        <text>a 2,3-saturated acyl-[ACP] + NAD(+) = a (2E)-enoyl-[ACP] + NADH + H(+)</text>
        <dbReference type="Rhea" id="RHEA:10240"/>
        <dbReference type="Rhea" id="RHEA-COMP:9925"/>
        <dbReference type="Rhea" id="RHEA-COMP:9926"/>
        <dbReference type="ChEBI" id="CHEBI:15378"/>
        <dbReference type="ChEBI" id="CHEBI:57540"/>
        <dbReference type="ChEBI" id="CHEBI:57945"/>
        <dbReference type="ChEBI" id="CHEBI:78784"/>
        <dbReference type="ChEBI" id="CHEBI:78785"/>
        <dbReference type="EC" id="1.3.1.9"/>
    </reaction>
</comment>
<comment type="pathway">
    <text evidence="1">Lipid metabolism; fatty acid biosynthesis.</text>
</comment>
<comment type="subunit">
    <text evidence="1">Monomer.</text>
</comment>
<comment type="similarity">
    <text evidence="1">Belongs to the TER reductase family.</text>
</comment>
<dbReference type="EC" id="1.3.1.9" evidence="1"/>
<dbReference type="EMBL" id="CP001614">
    <property type="protein sequence ID" value="ACR12480.1"/>
    <property type="molecule type" value="Genomic_DNA"/>
</dbReference>
<dbReference type="RefSeq" id="WP_015818592.1">
    <property type="nucleotide sequence ID" value="NC_012997.1"/>
</dbReference>
<dbReference type="SMR" id="C5BQC9"/>
<dbReference type="STRING" id="377629.TERTU_0977"/>
<dbReference type="KEGG" id="ttu:TERTU_0977"/>
<dbReference type="eggNOG" id="COG3007">
    <property type="taxonomic scope" value="Bacteria"/>
</dbReference>
<dbReference type="HOGENOM" id="CLU_057698_1_0_6"/>
<dbReference type="OrthoDB" id="9802260at2"/>
<dbReference type="UniPathway" id="UPA00094"/>
<dbReference type="Proteomes" id="UP000009080">
    <property type="component" value="Chromosome"/>
</dbReference>
<dbReference type="GO" id="GO:0004318">
    <property type="term" value="F:enoyl-[acyl-carrier-protein] reductase (NADH) activity"/>
    <property type="evidence" value="ECO:0007669"/>
    <property type="project" value="UniProtKB-UniRule"/>
</dbReference>
<dbReference type="GO" id="GO:0051287">
    <property type="term" value="F:NAD binding"/>
    <property type="evidence" value="ECO:0007669"/>
    <property type="project" value="UniProtKB-UniRule"/>
</dbReference>
<dbReference type="GO" id="GO:0050343">
    <property type="term" value="F:trans-2-enoyl-CoA reductase (NADH) activity"/>
    <property type="evidence" value="ECO:0007669"/>
    <property type="project" value="TreeGrafter"/>
</dbReference>
<dbReference type="GO" id="GO:0006633">
    <property type="term" value="P:fatty acid biosynthetic process"/>
    <property type="evidence" value="ECO:0007669"/>
    <property type="project" value="UniProtKB-UniRule"/>
</dbReference>
<dbReference type="FunFam" id="3.40.50.720:FF:000221">
    <property type="entry name" value="Enoyl-[acyl-carrier-protein] reductase [NADH]"/>
    <property type="match status" value="1"/>
</dbReference>
<dbReference type="Gene3D" id="3.40.50.720">
    <property type="entry name" value="NAD(P)-binding Rossmann-like Domain"/>
    <property type="match status" value="1"/>
</dbReference>
<dbReference type="HAMAP" id="MF_01838">
    <property type="entry name" value="FabV_reductase"/>
    <property type="match status" value="1"/>
</dbReference>
<dbReference type="InterPro" id="IPR024906">
    <property type="entry name" value="Eno_Rdtase_FAD-bd_dom"/>
</dbReference>
<dbReference type="InterPro" id="IPR024910">
    <property type="entry name" value="Enoyl-CoA_Rdtase_cat_dom"/>
</dbReference>
<dbReference type="InterPro" id="IPR050048">
    <property type="entry name" value="FabV-like_NADH_b"/>
</dbReference>
<dbReference type="InterPro" id="IPR010758">
    <property type="entry name" value="Trans-2-enoyl-CoA_reductase"/>
</dbReference>
<dbReference type="NCBIfam" id="NF043048">
    <property type="entry name" value="EnoyACPredFabV"/>
    <property type="match status" value="1"/>
</dbReference>
<dbReference type="NCBIfam" id="NF010177">
    <property type="entry name" value="PRK13656.1"/>
    <property type="match status" value="1"/>
</dbReference>
<dbReference type="PANTHER" id="PTHR37480">
    <property type="entry name" value="ENOYL-[ACYL-CARRIER-PROTEIN] REDUCTASE [NADH]"/>
    <property type="match status" value="1"/>
</dbReference>
<dbReference type="PANTHER" id="PTHR37480:SF1">
    <property type="entry name" value="ENOYL-[ACYL-CARRIER-PROTEIN] REDUCTASE [NADH]"/>
    <property type="match status" value="1"/>
</dbReference>
<dbReference type="Pfam" id="PF07055">
    <property type="entry name" value="Eno-Rase_FAD_bd"/>
    <property type="match status" value="1"/>
</dbReference>
<dbReference type="Pfam" id="PF12242">
    <property type="entry name" value="Eno-Rase_NADH_b"/>
    <property type="match status" value="1"/>
</dbReference>
<dbReference type="Pfam" id="PF12241">
    <property type="entry name" value="Enoyl_reductase"/>
    <property type="match status" value="1"/>
</dbReference>
<feature type="chain" id="PRO_1000216088" description="Enoyl-[acyl-carrier-protein] reductase [NADH]">
    <location>
        <begin position="1"/>
        <end position="396"/>
    </location>
</feature>
<feature type="active site" description="Proton donor" evidence="1">
    <location>
        <position position="235"/>
    </location>
</feature>
<feature type="binding site" evidence="1">
    <location>
        <begin position="48"/>
        <end position="53"/>
    </location>
    <ligand>
        <name>NAD(+)</name>
        <dbReference type="ChEBI" id="CHEBI:57540"/>
    </ligand>
</feature>
<feature type="binding site" evidence="1">
    <location>
        <begin position="74"/>
        <end position="75"/>
    </location>
    <ligand>
        <name>NAD(+)</name>
        <dbReference type="ChEBI" id="CHEBI:57540"/>
    </ligand>
</feature>
<feature type="binding site" evidence="1">
    <location>
        <begin position="111"/>
        <end position="112"/>
    </location>
    <ligand>
        <name>NAD(+)</name>
        <dbReference type="ChEBI" id="CHEBI:57540"/>
    </ligand>
</feature>
<feature type="binding site" evidence="1">
    <location>
        <begin position="139"/>
        <end position="140"/>
    </location>
    <ligand>
        <name>NAD(+)</name>
        <dbReference type="ChEBI" id="CHEBI:57540"/>
    </ligand>
</feature>
<feature type="binding site" evidence="1">
    <location>
        <position position="225"/>
    </location>
    <ligand>
        <name>substrate</name>
    </ligand>
</feature>
<feature type="binding site" evidence="1">
    <location>
        <position position="244"/>
    </location>
    <ligand>
        <name>NAD(+)</name>
        <dbReference type="ChEBI" id="CHEBI:57540"/>
    </ligand>
</feature>
<feature type="binding site" evidence="1">
    <location>
        <begin position="273"/>
        <end position="275"/>
    </location>
    <ligand>
        <name>NAD(+)</name>
        <dbReference type="ChEBI" id="CHEBI:57540"/>
    </ligand>
</feature>
<feature type="site" description="Plays an important role in discriminating NADH against NADPH" evidence="1">
    <location>
        <position position="75"/>
    </location>
</feature>
<keyword id="KW-0275">Fatty acid biosynthesis</keyword>
<keyword id="KW-0276">Fatty acid metabolism</keyword>
<keyword id="KW-0444">Lipid biosynthesis</keyword>
<keyword id="KW-0443">Lipid metabolism</keyword>
<keyword id="KW-0520">NAD</keyword>
<keyword id="KW-0560">Oxidoreductase</keyword>
<keyword id="KW-1185">Reference proteome</keyword>
<accession>C5BQC9</accession>
<proteinExistence type="inferred from homology"/>
<reference key="1">
    <citation type="journal article" date="2009" name="PLoS ONE">
        <title>The complete genome of Teredinibacter turnerae T7901: an intracellular endosymbiont of marine wood-boring bivalves (shipworms).</title>
        <authorList>
            <person name="Yang J.C."/>
            <person name="Madupu R."/>
            <person name="Durkin A.S."/>
            <person name="Ekborg N.A."/>
            <person name="Pedamallu C.S."/>
            <person name="Hostetler J.B."/>
            <person name="Radune D."/>
            <person name="Toms B.S."/>
            <person name="Henrissat B."/>
            <person name="Coutinho P.M."/>
            <person name="Schwarz S."/>
            <person name="Field L."/>
            <person name="Trindade-Silva A.E."/>
            <person name="Soares C.A.G."/>
            <person name="Elshahawi S."/>
            <person name="Hanora A."/>
            <person name="Schmidt E.W."/>
            <person name="Haygood M.G."/>
            <person name="Posfai J."/>
            <person name="Benner J."/>
            <person name="Madinger C."/>
            <person name="Nove J."/>
            <person name="Anton B."/>
            <person name="Chaudhary K."/>
            <person name="Foster J."/>
            <person name="Holman A."/>
            <person name="Kumar S."/>
            <person name="Lessard P.A."/>
            <person name="Luyten Y.A."/>
            <person name="Slatko B."/>
            <person name="Wood N."/>
            <person name="Wu B."/>
            <person name="Teplitski M."/>
            <person name="Mougous J.D."/>
            <person name="Ward N."/>
            <person name="Eisen J.A."/>
            <person name="Badger J.H."/>
            <person name="Distel D.L."/>
        </authorList>
    </citation>
    <scope>NUCLEOTIDE SEQUENCE [LARGE SCALE GENOMIC DNA]</scope>
    <source>
        <strain>ATCC 39867 / T7901</strain>
    </source>
</reference>
<evidence type="ECO:0000255" key="1">
    <source>
        <dbReference type="HAMAP-Rule" id="MF_01838"/>
    </source>
</evidence>
<sequence length="396" mass="42752">MIIKPKVRGFICTNAHPKGCAANVQAQIEYTQAQGKIENGPKNVLVVGASTGYGLASRIVAAFGCGAKTLGLFFEKPGTERKTGTAGFYNVAAFQQAAEKAGLWSKNMNGDAFSHEAKSKAIDVIKAEMGKIDLVVYSLASPRRQDPDSGEVYSSVLKPVGQAYTSKNLNTDTLKITETTLDAASDEEIAQTIKVMGGEDWELWMNALAEADVLAEGCKTVAYTYLGEKITWPIYGKATIGKAKEDLDRAATAIASAHSEKNISANVAVLKAVVTQASSAIPIMPLYLSALFKVMKANGTQEGCIEQLNRLFTECLYSDSPRLDDANRFRVDEKELSPEVQAGVEALWGEITEENLLEISDFKGYQQEFLGLFGFGVDGVDYEEDVDPNVALALVE</sequence>
<gene>
    <name evidence="1" type="primary">fabV</name>
    <name type="ordered locus">TERTU_0977</name>
</gene>